<sequence length="617" mass="70204">METKKGSLDWKNLQYDLQPWIKEAIASLGFPTMTPVQAATIPLLSGNKDVVVEAVTGSGKTLAFAIPVLQKVSNRLYDSQEEGEAPEKVKQGHMLAIVLSPTRELASQIQSVFNNVIEYLPEDKIPIKTQLLVGSLSTVRDDLDRFLKDKPHILIATPGRMLDFMSSQYVKMNSVEIAILDEADKLLDFSFEKDVVNILKRLPKQRRTGLFSATISAAGNTIFRAGMNNPVKVAVKSKSTTANSAPSALHISYLMIEPEKKITTLIKLLHDYRYKKCIVYFPTCTSVKHFYSIFQKIVNGNDNTESFKFYSLHGQLATKPRLRTLQSFTDGDVALNKHILMTTDVAARGIDIPDVDLVIQLDPPTDPDVFLHRCGRTGRANKVGRAIVMLNDGSRELDYVDFMEVKGVAMQEMPTPDLNQSDHQQFQDKLRKYMLDDRARHEIAIKSYVGFVRYYTKHMATSIFRYQTLDYLGIAKMYGLLRLPKMPESKYIPNDNMPDDGWLGEPIDMDKYSYADNQQEASRLENLNAEKIKKIADAKRRKELKVKNEAWSSKTETKETKQERREKMKRKREAIEKQIMEESSDDEETKVDWKDIVKSNKKKKANSGSMQGSFDDL</sequence>
<evidence type="ECO:0000250" key="1">
    <source>
        <dbReference type="UniProtKB" id="P25808"/>
    </source>
</evidence>
<evidence type="ECO:0000255" key="2"/>
<evidence type="ECO:0000255" key="3">
    <source>
        <dbReference type="PROSITE-ProRule" id="PRU00541"/>
    </source>
</evidence>
<evidence type="ECO:0000255" key="4">
    <source>
        <dbReference type="PROSITE-ProRule" id="PRU00542"/>
    </source>
</evidence>
<evidence type="ECO:0000256" key="5">
    <source>
        <dbReference type="SAM" id="MobiDB-lite"/>
    </source>
</evidence>
<evidence type="ECO:0000305" key="6"/>
<proteinExistence type="inferred from homology"/>
<gene>
    <name evidence="1" type="primary">SPB4</name>
    <name type="ORF">PICST_62830</name>
</gene>
<dbReference type="EC" id="3.6.4.13" evidence="1"/>
<dbReference type="EMBL" id="CP000500">
    <property type="protein sequence ID" value="ABN67719.2"/>
    <property type="molecule type" value="Genomic_DNA"/>
</dbReference>
<dbReference type="RefSeq" id="XP_001385748.2">
    <property type="nucleotide sequence ID" value="XM_001385711.1"/>
</dbReference>
<dbReference type="SMR" id="A3LX02"/>
<dbReference type="FunCoup" id="A3LX02">
    <property type="interactions" value="1215"/>
</dbReference>
<dbReference type="STRING" id="322104.A3LX02"/>
<dbReference type="GeneID" id="4839908"/>
<dbReference type="KEGG" id="pic:PICST_62830"/>
<dbReference type="eggNOG" id="KOG0345">
    <property type="taxonomic scope" value="Eukaryota"/>
</dbReference>
<dbReference type="HOGENOM" id="CLU_003041_26_4_1"/>
<dbReference type="InParanoid" id="A3LX02"/>
<dbReference type="OMA" id="AYKEHEC"/>
<dbReference type="OrthoDB" id="7396459at2759"/>
<dbReference type="Proteomes" id="UP000002258">
    <property type="component" value="Chromosome 6"/>
</dbReference>
<dbReference type="GO" id="GO:0030686">
    <property type="term" value="C:90S preribosome"/>
    <property type="evidence" value="ECO:0007669"/>
    <property type="project" value="EnsemblFungi"/>
</dbReference>
<dbReference type="GO" id="GO:0005730">
    <property type="term" value="C:nucleolus"/>
    <property type="evidence" value="ECO:0007669"/>
    <property type="project" value="UniProtKB-SubCell"/>
</dbReference>
<dbReference type="GO" id="GO:0005654">
    <property type="term" value="C:nucleoplasm"/>
    <property type="evidence" value="ECO:0007669"/>
    <property type="project" value="EnsemblFungi"/>
</dbReference>
<dbReference type="GO" id="GO:0030687">
    <property type="term" value="C:preribosome, large subunit precursor"/>
    <property type="evidence" value="ECO:0007669"/>
    <property type="project" value="EnsemblFungi"/>
</dbReference>
<dbReference type="GO" id="GO:0005524">
    <property type="term" value="F:ATP binding"/>
    <property type="evidence" value="ECO:0007669"/>
    <property type="project" value="UniProtKB-KW"/>
</dbReference>
<dbReference type="GO" id="GO:0016887">
    <property type="term" value="F:ATP hydrolysis activity"/>
    <property type="evidence" value="ECO:0007669"/>
    <property type="project" value="RHEA"/>
</dbReference>
<dbReference type="GO" id="GO:0003723">
    <property type="term" value="F:RNA binding"/>
    <property type="evidence" value="ECO:0007669"/>
    <property type="project" value="UniProtKB-KW"/>
</dbReference>
<dbReference type="GO" id="GO:0003724">
    <property type="term" value="F:RNA helicase activity"/>
    <property type="evidence" value="ECO:0007669"/>
    <property type="project" value="UniProtKB-EC"/>
</dbReference>
<dbReference type="GO" id="GO:1902626">
    <property type="term" value="P:assembly of large subunit precursor of preribosome"/>
    <property type="evidence" value="ECO:0007669"/>
    <property type="project" value="EnsemblFungi"/>
</dbReference>
<dbReference type="GO" id="GO:0000470">
    <property type="term" value="P:maturation of LSU-rRNA"/>
    <property type="evidence" value="ECO:0007669"/>
    <property type="project" value="EnsemblFungi"/>
</dbReference>
<dbReference type="CDD" id="cd17960">
    <property type="entry name" value="DEADc_DDX55"/>
    <property type="match status" value="1"/>
</dbReference>
<dbReference type="CDD" id="cd18787">
    <property type="entry name" value="SF2_C_DEAD"/>
    <property type="match status" value="1"/>
</dbReference>
<dbReference type="Gene3D" id="3.40.50.300">
    <property type="entry name" value="P-loop containing nucleotide triphosphate hydrolases"/>
    <property type="match status" value="2"/>
</dbReference>
<dbReference type="InterPro" id="IPR056330">
    <property type="entry name" value="CTT_SPB4"/>
</dbReference>
<dbReference type="InterPro" id="IPR011545">
    <property type="entry name" value="DEAD/DEAH_box_helicase_dom"/>
</dbReference>
<dbReference type="InterPro" id="IPR014001">
    <property type="entry name" value="Helicase_ATP-bd"/>
</dbReference>
<dbReference type="InterPro" id="IPR001650">
    <property type="entry name" value="Helicase_C-like"/>
</dbReference>
<dbReference type="InterPro" id="IPR027417">
    <property type="entry name" value="P-loop_NTPase"/>
</dbReference>
<dbReference type="InterPro" id="IPR000629">
    <property type="entry name" value="RNA-helicase_DEAD-box_CS"/>
</dbReference>
<dbReference type="InterPro" id="IPR014014">
    <property type="entry name" value="RNA_helicase_DEAD_Q_motif"/>
</dbReference>
<dbReference type="InterPro" id="IPR025313">
    <property type="entry name" value="SPB4-like_CTE"/>
</dbReference>
<dbReference type="PANTHER" id="PTHR24031">
    <property type="entry name" value="RNA HELICASE"/>
    <property type="match status" value="1"/>
</dbReference>
<dbReference type="Pfam" id="PF13959">
    <property type="entry name" value="CTE_SPB4"/>
    <property type="match status" value="1"/>
</dbReference>
<dbReference type="Pfam" id="PF23681">
    <property type="entry name" value="CTT_SPB4"/>
    <property type="match status" value="1"/>
</dbReference>
<dbReference type="Pfam" id="PF00270">
    <property type="entry name" value="DEAD"/>
    <property type="match status" value="1"/>
</dbReference>
<dbReference type="Pfam" id="PF00271">
    <property type="entry name" value="Helicase_C"/>
    <property type="match status" value="1"/>
</dbReference>
<dbReference type="SMART" id="SM00487">
    <property type="entry name" value="DEXDc"/>
    <property type="match status" value="1"/>
</dbReference>
<dbReference type="SMART" id="SM01178">
    <property type="entry name" value="DUF4217"/>
    <property type="match status" value="1"/>
</dbReference>
<dbReference type="SMART" id="SM00490">
    <property type="entry name" value="HELICc"/>
    <property type="match status" value="1"/>
</dbReference>
<dbReference type="SUPFAM" id="SSF52540">
    <property type="entry name" value="P-loop containing nucleoside triphosphate hydrolases"/>
    <property type="match status" value="1"/>
</dbReference>
<dbReference type="PROSITE" id="PS00039">
    <property type="entry name" value="DEAD_ATP_HELICASE"/>
    <property type="match status" value="1"/>
</dbReference>
<dbReference type="PROSITE" id="PS51192">
    <property type="entry name" value="HELICASE_ATP_BIND_1"/>
    <property type="match status" value="1"/>
</dbReference>
<dbReference type="PROSITE" id="PS51194">
    <property type="entry name" value="HELICASE_CTER"/>
    <property type="match status" value="1"/>
</dbReference>
<dbReference type="PROSITE" id="PS51195">
    <property type="entry name" value="Q_MOTIF"/>
    <property type="match status" value="1"/>
</dbReference>
<feature type="chain" id="PRO_0000285155" description="ATP-dependent rRNA helicase SPB4">
    <location>
        <begin position="1"/>
        <end position="617"/>
    </location>
</feature>
<feature type="domain" description="Helicase ATP-binding" evidence="3">
    <location>
        <begin position="41"/>
        <end position="233"/>
    </location>
</feature>
<feature type="domain" description="Helicase C-terminal" evidence="4">
    <location>
        <begin position="261"/>
        <end position="421"/>
    </location>
</feature>
<feature type="region of interest" description="Disordered" evidence="5">
    <location>
        <begin position="547"/>
        <end position="617"/>
    </location>
</feature>
<feature type="coiled-coil region" evidence="2">
    <location>
        <begin position="515"/>
        <end position="585"/>
    </location>
</feature>
<feature type="short sequence motif" description="Q motif" evidence="6">
    <location>
        <begin position="10"/>
        <end position="38"/>
    </location>
</feature>
<feature type="short sequence motif" description="DEAD box" evidence="6">
    <location>
        <begin position="181"/>
        <end position="184"/>
    </location>
</feature>
<feature type="compositionally biased region" description="Basic and acidic residues" evidence="5">
    <location>
        <begin position="555"/>
        <end position="566"/>
    </location>
</feature>
<feature type="compositionally biased region" description="Polar residues" evidence="5">
    <location>
        <begin position="608"/>
        <end position="617"/>
    </location>
</feature>
<feature type="binding site" evidence="3">
    <location>
        <begin position="54"/>
        <end position="61"/>
    </location>
    <ligand>
        <name>ATP</name>
        <dbReference type="ChEBI" id="CHEBI:30616"/>
    </ligand>
</feature>
<protein>
    <recommendedName>
        <fullName evidence="6">ATP-dependent rRNA helicase SPB4</fullName>
        <ecNumber evidence="1">3.6.4.13</ecNumber>
    </recommendedName>
</protein>
<keyword id="KW-0067">ATP-binding</keyword>
<keyword id="KW-0175">Coiled coil</keyword>
<keyword id="KW-0347">Helicase</keyword>
<keyword id="KW-0378">Hydrolase</keyword>
<keyword id="KW-0547">Nucleotide-binding</keyword>
<keyword id="KW-0539">Nucleus</keyword>
<keyword id="KW-1185">Reference proteome</keyword>
<keyword id="KW-0690">Ribosome biogenesis</keyword>
<keyword id="KW-0694">RNA-binding</keyword>
<keyword id="KW-0698">rRNA processing</keyword>
<name>SPB4_PICST</name>
<accession>A3LX02</accession>
<reference key="1">
    <citation type="journal article" date="2007" name="Nat. Biotechnol.">
        <title>Genome sequence of the lignocellulose-bioconverting and xylose-fermenting yeast Pichia stipitis.</title>
        <authorList>
            <person name="Jeffries T.W."/>
            <person name="Grigoriev I.V."/>
            <person name="Grimwood J."/>
            <person name="Laplaza J.M."/>
            <person name="Aerts A."/>
            <person name="Salamov A."/>
            <person name="Schmutz J."/>
            <person name="Lindquist E."/>
            <person name="Dehal P."/>
            <person name="Shapiro H."/>
            <person name="Jin Y.-S."/>
            <person name="Passoth V."/>
            <person name="Richardson P.M."/>
        </authorList>
    </citation>
    <scope>NUCLEOTIDE SEQUENCE [LARGE SCALE GENOMIC DNA]</scope>
    <source>
        <strain>ATCC 58785 / CBS 6054 / NBRC 10063 / NRRL Y-11545</strain>
    </source>
</reference>
<organism>
    <name type="scientific">Scheffersomyces stipitis (strain ATCC 58785 / CBS 6054 / NBRC 10063 / NRRL Y-11545)</name>
    <name type="common">Yeast</name>
    <name type="synonym">Pichia stipitis</name>
    <dbReference type="NCBI Taxonomy" id="322104"/>
    <lineage>
        <taxon>Eukaryota</taxon>
        <taxon>Fungi</taxon>
        <taxon>Dikarya</taxon>
        <taxon>Ascomycota</taxon>
        <taxon>Saccharomycotina</taxon>
        <taxon>Pichiomycetes</taxon>
        <taxon>Debaryomycetaceae</taxon>
        <taxon>Scheffersomyces</taxon>
    </lineage>
</organism>
<comment type="function">
    <text evidence="1">ATP-binding RNA helicase involved in the biogenesis of 60S ribosomal subunits. Binds 90S pre-ribosomal particles and dissociates from pre-60S ribosomal particles after processing of 27SB pre-rRNA. Required for the normal formation of 18S rRNA through the processing of pre-rRNAs at sites A0, A1 and A2, and the normal formation of 25S and 5.8S rRNAs through the processing of pre-rRNAs at sites C1 and C2.</text>
</comment>
<comment type="catalytic activity">
    <reaction evidence="1">
        <text>ATP + H2O = ADP + phosphate + H(+)</text>
        <dbReference type="Rhea" id="RHEA:13065"/>
        <dbReference type="ChEBI" id="CHEBI:15377"/>
        <dbReference type="ChEBI" id="CHEBI:15378"/>
        <dbReference type="ChEBI" id="CHEBI:30616"/>
        <dbReference type="ChEBI" id="CHEBI:43474"/>
        <dbReference type="ChEBI" id="CHEBI:456216"/>
        <dbReference type="EC" id="3.6.4.13"/>
    </reaction>
</comment>
<comment type="subunit">
    <text evidence="1">Component of pre-60S ribosomal complexes.</text>
</comment>
<comment type="subcellular location">
    <subcellularLocation>
        <location evidence="1">Nucleus</location>
        <location evidence="1">Nucleolus</location>
    </subcellularLocation>
</comment>
<comment type="domain">
    <text>The Q motif is unique to and characteristic of the DEAD box family of RNA helicases and controls ATP binding and hydrolysis.</text>
</comment>
<comment type="similarity">
    <text evidence="6">Belongs to the DEAD box helicase family. DDX55/SPB4 subfamily.</text>
</comment>